<protein>
    <recommendedName>
        <fullName evidence="1">UDP-N-acetylmuramoyl-L-alanyl-D-glutamate--2,6-diaminopimelate ligase</fullName>
        <ecNumber evidence="1">6.3.2.13</ecNumber>
    </recommendedName>
    <alternativeName>
        <fullName evidence="1">Meso-A2pm-adding enzyme</fullName>
    </alternativeName>
    <alternativeName>
        <fullName evidence="1">Meso-diaminopimelate-adding enzyme</fullName>
    </alternativeName>
    <alternativeName>
        <fullName evidence="1">UDP-MurNAc-L-Ala-D-Glu:meso-diaminopimelate ligase</fullName>
    </alternativeName>
    <alternativeName>
        <fullName evidence="1">UDP-MurNAc-tripeptide synthetase</fullName>
    </alternativeName>
    <alternativeName>
        <fullName evidence="1">UDP-N-acetylmuramyl-tripeptide synthetase</fullName>
    </alternativeName>
</protein>
<feature type="chain" id="PRO_0000101884" description="UDP-N-acetylmuramoyl-L-alanyl-D-glutamate--2,6-diaminopimelate ligase">
    <location>
        <begin position="1"/>
        <end position="493"/>
    </location>
</feature>
<feature type="short sequence motif" description="Meso-diaminopimelate recognition motif">
    <location>
        <begin position="410"/>
        <end position="413"/>
    </location>
</feature>
<feature type="binding site" evidence="1">
    <location>
        <position position="30"/>
    </location>
    <ligand>
        <name>UDP-N-acetyl-alpha-D-muramoyl-L-alanyl-D-glutamate</name>
        <dbReference type="ChEBI" id="CHEBI:83900"/>
    </ligand>
</feature>
<feature type="binding site" evidence="1">
    <location>
        <begin position="114"/>
        <end position="120"/>
    </location>
    <ligand>
        <name>ATP</name>
        <dbReference type="ChEBI" id="CHEBI:30616"/>
    </ligand>
</feature>
<feature type="binding site" evidence="1">
    <location>
        <begin position="156"/>
        <end position="157"/>
    </location>
    <ligand>
        <name>UDP-N-acetyl-alpha-D-muramoyl-L-alanyl-D-glutamate</name>
        <dbReference type="ChEBI" id="CHEBI:83900"/>
    </ligand>
</feature>
<feature type="binding site" evidence="1">
    <location>
        <position position="183"/>
    </location>
    <ligand>
        <name>UDP-N-acetyl-alpha-D-muramoyl-L-alanyl-D-glutamate</name>
        <dbReference type="ChEBI" id="CHEBI:83900"/>
    </ligand>
</feature>
<feature type="binding site" evidence="1">
    <location>
        <position position="189"/>
    </location>
    <ligand>
        <name>UDP-N-acetyl-alpha-D-muramoyl-L-alanyl-D-glutamate</name>
        <dbReference type="ChEBI" id="CHEBI:83900"/>
    </ligand>
</feature>
<feature type="binding site" evidence="1">
    <location>
        <position position="191"/>
    </location>
    <ligand>
        <name>UDP-N-acetyl-alpha-D-muramoyl-L-alanyl-D-glutamate</name>
        <dbReference type="ChEBI" id="CHEBI:83900"/>
    </ligand>
</feature>
<feature type="binding site" evidence="1">
    <location>
        <position position="386"/>
    </location>
    <ligand>
        <name>meso-2,6-diaminopimelate</name>
        <dbReference type="ChEBI" id="CHEBI:57791"/>
    </ligand>
</feature>
<feature type="binding site" evidence="1">
    <location>
        <begin position="410"/>
        <end position="413"/>
    </location>
    <ligand>
        <name>meso-2,6-diaminopimelate</name>
        <dbReference type="ChEBI" id="CHEBI:57791"/>
    </ligand>
</feature>
<feature type="binding site" evidence="1">
    <location>
        <position position="460"/>
    </location>
    <ligand>
        <name>meso-2,6-diaminopimelate</name>
        <dbReference type="ChEBI" id="CHEBI:57791"/>
    </ligand>
</feature>
<feature type="binding site" evidence="1">
    <location>
        <position position="464"/>
    </location>
    <ligand>
        <name>meso-2,6-diaminopimelate</name>
        <dbReference type="ChEBI" id="CHEBI:57791"/>
    </ligand>
</feature>
<feature type="modified residue" description="N6-carboxylysine" evidence="1">
    <location>
        <position position="223"/>
    </location>
</feature>
<organism>
    <name type="scientific">Chromobacterium violaceum (strain ATCC 12472 / DSM 30191 / JCM 1249 / CCUG 213 / NBRC 12614 / NCIMB 9131 / NCTC 9757 / MK)</name>
    <dbReference type="NCBI Taxonomy" id="243365"/>
    <lineage>
        <taxon>Bacteria</taxon>
        <taxon>Pseudomonadati</taxon>
        <taxon>Pseudomonadota</taxon>
        <taxon>Betaproteobacteria</taxon>
        <taxon>Neisseriales</taxon>
        <taxon>Chromobacteriaceae</taxon>
        <taxon>Chromobacterium</taxon>
    </lineage>
</organism>
<sequence>MKSRLTALPDWDPALLQQLGLPIKRVEADSRRVLPGDVFLACRGEYADGRDFIPAALEKGAAAVLWDEADGFAWKAEWQAPNLAVPNLRERAGIVAAHVLGLPSRDLTVVGITGTNGKTSISHWLAQAFSLLGQKAALIGTVGNGFYGHLTETTHTTPDPVTVQQKLAEYRRQGAHVVTMEVSSHGLDQFRVNGVEFATAVFTNLTRDHLDYHGSMEAYGESKKKLFFWEGLKHAVINADDAFGRQLAAGIDPKQTRVVTYGLEQGDVRPLALAATLEGLQLTVATPWGTVDVRTGLVGRFNAANLLACLATLCVNGVSLQDAAAVMARIQPARGRMQSVGGAHEPLVVIDYAHTPDALEKALATLSEIRPAGGRLFCVFGCGGDRDPGKRPMMGAIAEKHADVAVLTSDNPRSEDPQAIIRDVLAGMDAARAHVEADREAAIHWAVAQARVGDVVLVAGKGHEEYQDIAGVKRPFSDFRVAEEALTAWGKRP</sequence>
<proteinExistence type="inferred from homology"/>
<comment type="function">
    <text evidence="1">Catalyzes the addition of meso-diaminopimelic acid to the nucleotide precursor UDP-N-acetylmuramoyl-L-alanyl-D-glutamate (UMAG) in the biosynthesis of bacterial cell-wall peptidoglycan.</text>
</comment>
<comment type="catalytic activity">
    <reaction evidence="1">
        <text>UDP-N-acetyl-alpha-D-muramoyl-L-alanyl-D-glutamate + meso-2,6-diaminopimelate + ATP = UDP-N-acetyl-alpha-D-muramoyl-L-alanyl-gamma-D-glutamyl-meso-2,6-diaminopimelate + ADP + phosphate + H(+)</text>
        <dbReference type="Rhea" id="RHEA:23676"/>
        <dbReference type="ChEBI" id="CHEBI:15378"/>
        <dbReference type="ChEBI" id="CHEBI:30616"/>
        <dbReference type="ChEBI" id="CHEBI:43474"/>
        <dbReference type="ChEBI" id="CHEBI:57791"/>
        <dbReference type="ChEBI" id="CHEBI:83900"/>
        <dbReference type="ChEBI" id="CHEBI:83905"/>
        <dbReference type="ChEBI" id="CHEBI:456216"/>
        <dbReference type="EC" id="6.3.2.13"/>
    </reaction>
</comment>
<comment type="cofactor">
    <cofactor evidence="1">
        <name>Mg(2+)</name>
        <dbReference type="ChEBI" id="CHEBI:18420"/>
    </cofactor>
</comment>
<comment type="pathway">
    <text evidence="1">Cell wall biogenesis; peptidoglycan biosynthesis.</text>
</comment>
<comment type="subcellular location">
    <subcellularLocation>
        <location evidence="1">Cytoplasm</location>
    </subcellularLocation>
</comment>
<comment type="PTM">
    <text evidence="1">Carboxylation is probably crucial for Mg(2+) binding and, consequently, for the gamma-phosphate positioning of ATP.</text>
</comment>
<comment type="similarity">
    <text evidence="1">Belongs to the MurCDEF family. MurE subfamily.</text>
</comment>
<evidence type="ECO:0000255" key="1">
    <source>
        <dbReference type="HAMAP-Rule" id="MF_00208"/>
    </source>
</evidence>
<keyword id="KW-0067">ATP-binding</keyword>
<keyword id="KW-0131">Cell cycle</keyword>
<keyword id="KW-0132">Cell division</keyword>
<keyword id="KW-0133">Cell shape</keyword>
<keyword id="KW-0961">Cell wall biogenesis/degradation</keyword>
<keyword id="KW-0963">Cytoplasm</keyword>
<keyword id="KW-0436">Ligase</keyword>
<keyword id="KW-0460">Magnesium</keyword>
<keyword id="KW-0547">Nucleotide-binding</keyword>
<keyword id="KW-0573">Peptidoglycan synthesis</keyword>
<keyword id="KW-1185">Reference proteome</keyword>
<dbReference type="EC" id="6.3.2.13" evidence="1"/>
<dbReference type="EMBL" id="AE016825">
    <property type="protein sequence ID" value="AAQ62007.1"/>
    <property type="molecule type" value="Genomic_DNA"/>
</dbReference>
<dbReference type="RefSeq" id="WP_011137894.1">
    <property type="nucleotide sequence ID" value="NC_005085.1"/>
</dbReference>
<dbReference type="SMR" id="Q7NPZ4"/>
<dbReference type="STRING" id="243365.CV_4348"/>
<dbReference type="KEGG" id="cvi:CV_4348"/>
<dbReference type="eggNOG" id="COG0769">
    <property type="taxonomic scope" value="Bacteria"/>
</dbReference>
<dbReference type="HOGENOM" id="CLU_022291_4_1_4"/>
<dbReference type="OrthoDB" id="9800958at2"/>
<dbReference type="UniPathway" id="UPA00219"/>
<dbReference type="Proteomes" id="UP000001424">
    <property type="component" value="Chromosome"/>
</dbReference>
<dbReference type="GO" id="GO:0005737">
    <property type="term" value="C:cytoplasm"/>
    <property type="evidence" value="ECO:0007669"/>
    <property type="project" value="UniProtKB-SubCell"/>
</dbReference>
<dbReference type="GO" id="GO:0005524">
    <property type="term" value="F:ATP binding"/>
    <property type="evidence" value="ECO:0007669"/>
    <property type="project" value="UniProtKB-UniRule"/>
</dbReference>
<dbReference type="GO" id="GO:0000287">
    <property type="term" value="F:magnesium ion binding"/>
    <property type="evidence" value="ECO:0007669"/>
    <property type="project" value="UniProtKB-UniRule"/>
</dbReference>
<dbReference type="GO" id="GO:0008765">
    <property type="term" value="F:UDP-N-acetylmuramoylalanyl-D-glutamate-2,6-diaminopimelate ligase activity"/>
    <property type="evidence" value="ECO:0007669"/>
    <property type="project" value="UniProtKB-UniRule"/>
</dbReference>
<dbReference type="GO" id="GO:0051301">
    <property type="term" value="P:cell division"/>
    <property type="evidence" value="ECO:0007669"/>
    <property type="project" value="UniProtKB-KW"/>
</dbReference>
<dbReference type="GO" id="GO:0071555">
    <property type="term" value="P:cell wall organization"/>
    <property type="evidence" value="ECO:0007669"/>
    <property type="project" value="UniProtKB-KW"/>
</dbReference>
<dbReference type="GO" id="GO:0009252">
    <property type="term" value="P:peptidoglycan biosynthetic process"/>
    <property type="evidence" value="ECO:0007669"/>
    <property type="project" value="UniProtKB-UniRule"/>
</dbReference>
<dbReference type="GO" id="GO:0008360">
    <property type="term" value="P:regulation of cell shape"/>
    <property type="evidence" value="ECO:0007669"/>
    <property type="project" value="UniProtKB-KW"/>
</dbReference>
<dbReference type="Gene3D" id="3.90.190.20">
    <property type="entry name" value="Mur ligase, C-terminal domain"/>
    <property type="match status" value="1"/>
</dbReference>
<dbReference type="Gene3D" id="3.40.1190.10">
    <property type="entry name" value="Mur-like, catalytic domain"/>
    <property type="match status" value="1"/>
</dbReference>
<dbReference type="Gene3D" id="3.40.1390.10">
    <property type="entry name" value="MurE/MurF, N-terminal domain"/>
    <property type="match status" value="1"/>
</dbReference>
<dbReference type="HAMAP" id="MF_00208">
    <property type="entry name" value="MurE"/>
    <property type="match status" value="1"/>
</dbReference>
<dbReference type="InterPro" id="IPR036565">
    <property type="entry name" value="Mur-like_cat_sf"/>
</dbReference>
<dbReference type="InterPro" id="IPR004101">
    <property type="entry name" value="Mur_ligase_C"/>
</dbReference>
<dbReference type="InterPro" id="IPR036615">
    <property type="entry name" value="Mur_ligase_C_dom_sf"/>
</dbReference>
<dbReference type="InterPro" id="IPR013221">
    <property type="entry name" value="Mur_ligase_cen"/>
</dbReference>
<dbReference type="InterPro" id="IPR000713">
    <property type="entry name" value="Mur_ligase_N"/>
</dbReference>
<dbReference type="InterPro" id="IPR035911">
    <property type="entry name" value="MurE/MurF_N"/>
</dbReference>
<dbReference type="InterPro" id="IPR005761">
    <property type="entry name" value="UDP-N-AcMur-Glu-dNH2Pim_ligase"/>
</dbReference>
<dbReference type="NCBIfam" id="TIGR01085">
    <property type="entry name" value="murE"/>
    <property type="match status" value="1"/>
</dbReference>
<dbReference type="NCBIfam" id="NF001124">
    <property type="entry name" value="PRK00139.1-2"/>
    <property type="match status" value="1"/>
</dbReference>
<dbReference type="NCBIfam" id="NF001126">
    <property type="entry name" value="PRK00139.1-4"/>
    <property type="match status" value="1"/>
</dbReference>
<dbReference type="PANTHER" id="PTHR23135">
    <property type="entry name" value="MUR LIGASE FAMILY MEMBER"/>
    <property type="match status" value="1"/>
</dbReference>
<dbReference type="PANTHER" id="PTHR23135:SF4">
    <property type="entry name" value="UDP-N-ACETYLMURAMOYL-L-ALANYL-D-GLUTAMATE--2,6-DIAMINOPIMELATE LIGASE MURE HOMOLOG, CHLOROPLASTIC"/>
    <property type="match status" value="1"/>
</dbReference>
<dbReference type="Pfam" id="PF01225">
    <property type="entry name" value="Mur_ligase"/>
    <property type="match status" value="1"/>
</dbReference>
<dbReference type="Pfam" id="PF02875">
    <property type="entry name" value="Mur_ligase_C"/>
    <property type="match status" value="1"/>
</dbReference>
<dbReference type="Pfam" id="PF08245">
    <property type="entry name" value="Mur_ligase_M"/>
    <property type="match status" value="1"/>
</dbReference>
<dbReference type="SUPFAM" id="SSF53623">
    <property type="entry name" value="MurD-like peptide ligases, catalytic domain"/>
    <property type="match status" value="1"/>
</dbReference>
<dbReference type="SUPFAM" id="SSF53244">
    <property type="entry name" value="MurD-like peptide ligases, peptide-binding domain"/>
    <property type="match status" value="1"/>
</dbReference>
<dbReference type="SUPFAM" id="SSF63418">
    <property type="entry name" value="MurE/MurF N-terminal domain"/>
    <property type="match status" value="1"/>
</dbReference>
<accession>Q7NPZ4</accession>
<reference key="1">
    <citation type="journal article" date="2003" name="Proc. Natl. Acad. Sci. U.S.A.">
        <title>The complete genome sequence of Chromobacterium violaceum reveals remarkable and exploitable bacterial adaptability.</title>
        <authorList>
            <person name="Vasconcelos A.T.R."/>
            <person name="de Almeida D.F."/>
            <person name="Hungria M."/>
            <person name="Guimaraes C.T."/>
            <person name="Antonio R.V."/>
            <person name="Almeida F.C."/>
            <person name="de Almeida L.G.P."/>
            <person name="de Almeida R."/>
            <person name="Alves-Gomes J.A."/>
            <person name="Andrade E.M."/>
            <person name="Araripe J."/>
            <person name="de Araujo M.F.F."/>
            <person name="Astolfi-Filho S."/>
            <person name="Azevedo V."/>
            <person name="Baptista A.J."/>
            <person name="Bataus L.A.M."/>
            <person name="Batista J.S."/>
            <person name="Belo A."/>
            <person name="van den Berg C."/>
            <person name="Bogo M."/>
            <person name="Bonatto S."/>
            <person name="Bordignon J."/>
            <person name="Brigido M.M."/>
            <person name="Brito C.A."/>
            <person name="Brocchi M."/>
            <person name="Burity H.A."/>
            <person name="Camargo A.A."/>
            <person name="Cardoso D.D.P."/>
            <person name="Carneiro N.P."/>
            <person name="Carraro D.M."/>
            <person name="Carvalho C.M.B."/>
            <person name="Cascardo J.C.M."/>
            <person name="Cavada B.S."/>
            <person name="Chueire L.M.O."/>
            <person name="Creczynski-Pasa T.B."/>
            <person name="Cunha-Junior N.C."/>
            <person name="Fagundes N."/>
            <person name="Falcao C.L."/>
            <person name="Fantinatti F."/>
            <person name="Farias I.P."/>
            <person name="Felipe M.S.S."/>
            <person name="Ferrari L.P."/>
            <person name="Ferro J.A."/>
            <person name="Ferro M.I.T."/>
            <person name="Franco G.R."/>
            <person name="Freitas N.S.A."/>
            <person name="Furlan L.R."/>
            <person name="Gazzinelli R.T."/>
            <person name="Gomes E.A."/>
            <person name="Goncalves P.R."/>
            <person name="Grangeiro T.B."/>
            <person name="Grattapaglia D."/>
            <person name="Grisard E.C."/>
            <person name="Hanna E.S."/>
            <person name="Jardim S.N."/>
            <person name="Laurino J."/>
            <person name="Leoi L.C.T."/>
            <person name="Lima L.F.A."/>
            <person name="Loureiro M.F."/>
            <person name="Lyra M.C.C.P."/>
            <person name="Madeira H.M.F."/>
            <person name="Manfio G.P."/>
            <person name="Maranhao A.Q."/>
            <person name="Martins W.S."/>
            <person name="di Mauro S.M.Z."/>
            <person name="de Medeiros S.R.B."/>
            <person name="Meissner R.V."/>
            <person name="Moreira M.A.M."/>
            <person name="Nascimento F.F."/>
            <person name="Nicolas M.F."/>
            <person name="Oliveira J.G."/>
            <person name="Oliveira S.C."/>
            <person name="Paixao R.F.C."/>
            <person name="Parente J.A."/>
            <person name="Pedrosa F.O."/>
            <person name="Pena S.D.J."/>
            <person name="Pereira J.O."/>
            <person name="Pereira M."/>
            <person name="Pinto L.S.R.C."/>
            <person name="Pinto L.S."/>
            <person name="Porto J.I.R."/>
            <person name="Potrich D.P."/>
            <person name="Ramalho-Neto C.E."/>
            <person name="Reis A.M.M."/>
            <person name="Rigo L.U."/>
            <person name="Rondinelli E."/>
            <person name="Santos E.B.P."/>
            <person name="Santos F.R."/>
            <person name="Schneider M.P.C."/>
            <person name="Seuanez H.N."/>
            <person name="Silva A.M.R."/>
            <person name="da Silva A.L.C."/>
            <person name="Silva D.W."/>
            <person name="Silva R."/>
            <person name="Simoes I.C."/>
            <person name="Simon D."/>
            <person name="Soares C.M.A."/>
            <person name="Soares R.B.A."/>
            <person name="Souza E.M."/>
            <person name="Souza K.R.L."/>
            <person name="Souza R.C."/>
            <person name="Steffens M.B.R."/>
            <person name="Steindel M."/>
            <person name="Teixeira S.R."/>
            <person name="Urmenyi T."/>
            <person name="Vettore A."/>
            <person name="Wassem R."/>
            <person name="Zaha A."/>
            <person name="Simpson A.J.G."/>
        </authorList>
    </citation>
    <scope>NUCLEOTIDE SEQUENCE [LARGE SCALE GENOMIC DNA]</scope>
    <source>
        <strain>ATCC 12472 / DSM 30191 / JCM 1249 / CCUG 213 / NBRC 12614 / NCIMB 9131 / NCTC 9757 / MK</strain>
    </source>
</reference>
<name>MURE_CHRVO</name>
<gene>
    <name evidence="1" type="primary">murE</name>
    <name type="ordered locus">CV_4348</name>
</gene>